<protein>
    <recommendedName>
        <fullName evidence="1">ATP-dependent Clp protease proteolytic subunit</fullName>
        <ecNumber evidence="1">3.4.21.92</ecNumber>
    </recommendedName>
    <alternativeName>
        <fullName evidence="1">Endopeptidase Clp</fullName>
    </alternativeName>
</protein>
<accession>B9M0Y1</accession>
<proteinExistence type="inferred from homology"/>
<dbReference type="EC" id="3.4.21.92" evidence="1"/>
<dbReference type="EMBL" id="CP001390">
    <property type="protein sequence ID" value="ACM20984.1"/>
    <property type="molecule type" value="Genomic_DNA"/>
</dbReference>
<dbReference type="RefSeq" id="WP_012647713.1">
    <property type="nucleotide sequence ID" value="NC_011979.1"/>
</dbReference>
<dbReference type="SMR" id="B9M0Y1"/>
<dbReference type="STRING" id="316067.Geob_2634"/>
<dbReference type="MEROPS" id="S14.001"/>
<dbReference type="KEGG" id="geo:Geob_2634"/>
<dbReference type="eggNOG" id="COG0740">
    <property type="taxonomic scope" value="Bacteria"/>
</dbReference>
<dbReference type="HOGENOM" id="CLU_058707_3_2_7"/>
<dbReference type="OrthoDB" id="9802800at2"/>
<dbReference type="Proteomes" id="UP000007721">
    <property type="component" value="Chromosome"/>
</dbReference>
<dbReference type="GO" id="GO:0005737">
    <property type="term" value="C:cytoplasm"/>
    <property type="evidence" value="ECO:0007669"/>
    <property type="project" value="UniProtKB-SubCell"/>
</dbReference>
<dbReference type="GO" id="GO:0009368">
    <property type="term" value="C:endopeptidase Clp complex"/>
    <property type="evidence" value="ECO:0007669"/>
    <property type="project" value="TreeGrafter"/>
</dbReference>
<dbReference type="GO" id="GO:0004176">
    <property type="term" value="F:ATP-dependent peptidase activity"/>
    <property type="evidence" value="ECO:0007669"/>
    <property type="project" value="InterPro"/>
</dbReference>
<dbReference type="GO" id="GO:0051117">
    <property type="term" value="F:ATPase binding"/>
    <property type="evidence" value="ECO:0007669"/>
    <property type="project" value="TreeGrafter"/>
</dbReference>
<dbReference type="GO" id="GO:0004252">
    <property type="term" value="F:serine-type endopeptidase activity"/>
    <property type="evidence" value="ECO:0007669"/>
    <property type="project" value="UniProtKB-UniRule"/>
</dbReference>
<dbReference type="GO" id="GO:0006515">
    <property type="term" value="P:protein quality control for misfolded or incompletely synthesized proteins"/>
    <property type="evidence" value="ECO:0007669"/>
    <property type="project" value="TreeGrafter"/>
</dbReference>
<dbReference type="CDD" id="cd07017">
    <property type="entry name" value="S14_ClpP_2"/>
    <property type="match status" value="1"/>
</dbReference>
<dbReference type="FunFam" id="3.90.226.10:FF:000001">
    <property type="entry name" value="ATP-dependent Clp protease proteolytic subunit"/>
    <property type="match status" value="1"/>
</dbReference>
<dbReference type="Gene3D" id="3.90.226.10">
    <property type="entry name" value="2-enoyl-CoA Hydratase, Chain A, domain 1"/>
    <property type="match status" value="1"/>
</dbReference>
<dbReference type="HAMAP" id="MF_00444">
    <property type="entry name" value="ClpP"/>
    <property type="match status" value="1"/>
</dbReference>
<dbReference type="InterPro" id="IPR001907">
    <property type="entry name" value="ClpP"/>
</dbReference>
<dbReference type="InterPro" id="IPR029045">
    <property type="entry name" value="ClpP/crotonase-like_dom_sf"/>
</dbReference>
<dbReference type="InterPro" id="IPR023562">
    <property type="entry name" value="ClpP/TepA"/>
</dbReference>
<dbReference type="InterPro" id="IPR033135">
    <property type="entry name" value="ClpP_His_AS"/>
</dbReference>
<dbReference type="InterPro" id="IPR018215">
    <property type="entry name" value="ClpP_Ser_AS"/>
</dbReference>
<dbReference type="NCBIfam" id="TIGR00493">
    <property type="entry name" value="clpP"/>
    <property type="match status" value="1"/>
</dbReference>
<dbReference type="NCBIfam" id="NF001368">
    <property type="entry name" value="PRK00277.1"/>
    <property type="match status" value="1"/>
</dbReference>
<dbReference type="NCBIfam" id="NF009205">
    <property type="entry name" value="PRK12553.1"/>
    <property type="match status" value="1"/>
</dbReference>
<dbReference type="PANTHER" id="PTHR10381">
    <property type="entry name" value="ATP-DEPENDENT CLP PROTEASE PROTEOLYTIC SUBUNIT"/>
    <property type="match status" value="1"/>
</dbReference>
<dbReference type="PANTHER" id="PTHR10381:SF70">
    <property type="entry name" value="ATP-DEPENDENT CLP PROTEASE PROTEOLYTIC SUBUNIT"/>
    <property type="match status" value="1"/>
</dbReference>
<dbReference type="Pfam" id="PF00574">
    <property type="entry name" value="CLP_protease"/>
    <property type="match status" value="1"/>
</dbReference>
<dbReference type="PRINTS" id="PR00127">
    <property type="entry name" value="CLPPROTEASEP"/>
</dbReference>
<dbReference type="SUPFAM" id="SSF52096">
    <property type="entry name" value="ClpP/crotonase"/>
    <property type="match status" value="1"/>
</dbReference>
<dbReference type="PROSITE" id="PS00382">
    <property type="entry name" value="CLP_PROTEASE_HIS"/>
    <property type="match status" value="1"/>
</dbReference>
<dbReference type="PROSITE" id="PS00381">
    <property type="entry name" value="CLP_PROTEASE_SER"/>
    <property type="match status" value="1"/>
</dbReference>
<evidence type="ECO:0000255" key="1">
    <source>
        <dbReference type="HAMAP-Rule" id="MF_00444"/>
    </source>
</evidence>
<comment type="function">
    <text evidence="1">Cleaves peptides in various proteins in a process that requires ATP hydrolysis. Has a chymotrypsin-like activity. Plays a major role in the degradation of misfolded proteins.</text>
</comment>
<comment type="catalytic activity">
    <reaction evidence="1">
        <text>Hydrolysis of proteins to small peptides in the presence of ATP and magnesium. alpha-casein is the usual test substrate. In the absence of ATP, only oligopeptides shorter than five residues are hydrolyzed (such as succinyl-Leu-Tyr-|-NHMec, and Leu-Tyr-Leu-|-Tyr-Trp, in which cleavage of the -Tyr-|-Leu- and -Tyr-|-Trp bonds also occurs).</text>
        <dbReference type="EC" id="3.4.21.92"/>
    </reaction>
</comment>
<comment type="subunit">
    <text evidence="1">Fourteen ClpP subunits assemble into 2 heptameric rings which stack back to back to give a disk-like structure with a central cavity, resembling the structure of eukaryotic proteasomes.</text>
</comment>
<comment type="subcellular location">
    <subcellularLocation>
        <location evidence="1">Cytoplasm</location>
    </subcellularLocation>
</comment>
<comment type="similarity">
    <text evidence="1">Belongs to the peptidase S14 family.</text>
</comment>
<gene>
    <name evidence="1" type="primary">clpP</name>
    <name type="ordered locus">Geob_2634</name>
</gene>
<sequence length="199" mass="21834">MLVPIVVEQTGRGERSYDIYSRLLKDRIIFLGGAIDDTVSNLVIAQLLFLEAEDPDKDIHLYINSPGGVVTAGMAIYDTMRYIKAPVSTICVGQAASMGAFLLSGGEKGKRFSLANSRIMIHQPLGGFQGQATDIHIHAQEILRMKKKLNELLAEHSGQTVEKIEADTERDYFMSGEDAKTYGIIDSIITRNTITGGSR</sequence>
<organism>
    <name type="scientific">Geotalea daltonii (strain DSM 22248 / JCM 15807 / FRC-32)</name>
    <name type="common">Geobacter daltonii</name>
    <dbReference type="NCBI Taxonomy" id="316067"/>
    <lineage>
        <taxon>Bacteria</taxon>
        <taxon>Pseudomonadati</taxon>
        <taxon>Thermodesulfobacteriota</taxon>
        <taxon>Desulfuromonadia</taxon>
        <taxon>Geobacterales</taxon>
        <taxon>Geobacteraceae</taxon>
        <taxon>Geotalea</taxon>
    </lineage>
</organism>
<keyword id="KW-0963">Cytoplasm</keyword>
<keyword id="KW-0378">Hydrolase</keyword>
<keyword id="KW-0645">Protease</keyword>
<keyword id="KW-1185">Reference proteome</keyword>
<keyword id="KW-0720">Serine protease</keyword>
<feature type="chain" id="PRO_1000135154" description="ATP-dependent Clp protease proteolytic subunit">
    <location>
        <begin position="1"/>
        <end position="199"/>
    </location>
</feature>
<feature type="active site" description="Nucleophile" evidence="1">
    <location>
        <position position="97"/>
    </location>
</feature>
<feature type="active site" evidence="1">
    <location>
        <position position="122"/>
    </location>
</feature>
<name>CLPP_GEODF</name>
<reference key="1">
    <citation type="submission" date="2009-01" db="EMBL/GenBank/DDBJ databases">
        <title>Complete sequence of Geobacter sp. FRC-32.</title>
        <authorList>
            <consortium name="US DOE Joint Genome Institute"/>
            <person name="Lucas S."/>
            <person name="Copeland A."/>
            <person name="Lapidus A."/>
            <person name="Glavina del Rio T."/>
            <person name="Dalin E."/>
            <person name="Tice H."/>
            <person name="Bruce D."/>
            <person name="Goodwin L."/>
            <person name="Pitluck S."/>
            <person name="Saunders E."/>
            <person name="Brettin T."/>
            <person name="Detter J.C."/>
            <person name="Han C."/>
            <person name="Larimer F."/>
            <person name="Land M."/>
            <person name="Hauser L."/>
            <person name="Kyrpides N."/>
            <person name="Ovchinnikova G."/>
            <person name="Kostka J."/>
            <person name="Richardson P."/>
        </authorList>
    </citation>
    <scope>NUCLEOTIDE SEQUENCE [LARGE SCALE GENOMIC DNA]</scope>
    <source>
        <strain>DSM 22248 / JCM 15807 / FRC-32</strain>
    </source>
</reference>